<sequence length="698" mass="77143">MARNTPIERYRNIGICAHVDAGKTTTTERILFYTGLSHKIGEVHDGAATMDWMEQEQERGITITSAATTTFWRGMDAQFQDHRINIIDTPGHVDFTIEVERSLRVLDGAVVVFCGSSGVEPQSETVWRQADKYGVPRIVFVNKMDRAGADFLRVVDQIKNRLGATPVPIQLNIGAEEDFSGVVDLIKMKRINWNEADQGMTFTYEEIPADMQELAEEWRQNLVEAAAEASEELMDKYLEGEELSEAEIKEALRTRTLNNEIVLATCGSAFKNKGVQAVLDAVIEFLPAPVDVPAIKGVDENDNEVERHADDNEPFAALAFKIATDPFVGSLTFMRVYSGVVNTGDAVYNSVKQKRERFGRIVQLHANKREEVKEVRAGDIAAAIGLKDVTTGDTLCDQNAKVILERMEFPEPVIQIAVEPRTQADQEKMGIALGKLAAEDPSFRVETDEESGQTLISGMGELHLDIIVDRMKREFSVECNVGKPQVAYRETIRGTTEVEGKFVRQSGGRGQYGHVWLKIEPSEPDAGFVFVDEIVGGAVPREYISSVAKGIEEQMHNGVLAGYPVLDVKATLFDGSYLDVDSSEMAFKIAGSMAFKKGALEAQPVILEPMMKVEVTTPEDWMGDVVGDLNRRRGMIEGMDDGVAGLKIIRAQVPLSEMFGYATSLRSATQGRASYSMEFAEYGEVSKNIADRIIAERG</sequence>
<name>EFG1_ALIF1</name>
<dbReference type="EMBL" id="CP000020">
    <property type="protein sequence ID" value="AAW84727.1"/>
    <property type="molecule type" value="Genomic_DNA"/>
</dbReference>
<dbReference type="RefSeq" id="WP_011261077.1">
    <property type="nucleotide sequence ID" value="NC_006840.2"/>
</dbReference>
<dbReference type="RefSeq" id="YP_203615.1">
    <property type="nucleotide sequence ID" value="NC_006840.2"/>
</dbReference>
<dbReference type="SMR" id="Q5E8B9"/>
<dbReference type="STRING" id="312309.VF_0232"/>
<dbReference type="EnsemblBacteria" id="AAW84727">
    <property type="protein sequence ID" value="AAW84727"/>
    <property type="gene ID" value="VF_0232"/>
</dbReference>
<dbReference type="GeneID" id="54162855"/>
<dbReference type="KEGG" id="vfi:VF_0232"/>
<dbReference type="PATRIC" id="fig|312309.11.peg.229"/>
<dbReference type="eggNOG" id="COG0480">
    <property type="taxonomic scope" value="Bacteria"/>
</dbReference>
<dbReference type="HOGENOM" id="CLU_002794_4_1_6"/>
<dbReference type="OrthoDB" id="9804431at2"/>
<dbReference type="Proteomes" id="UP000000537">
    <property type="component" value="Chromosome I"/>
</dbReference>
<dbReference type="GO" id="GO:0005737">
    <property type="term" value="C:cytoplasm"/>
    <property type="evidence" value="ECO:0007669"/>
    <property type="project" value="UniProtKB-SubCell"/>
</dbReference>
<dbReference type="GO" id="GO:0005525">
    <property type="term" value="F:GTP binding"/>
    <property type="evidence" value="ECO:0007669"/>
    <property type="project" value="UniProtKB-UniRule"/>
</dbReference>
<dbReference type="GO" id="GO:0003924">
    <property type="term" value="F:GTPase activity"/>
    <property type="evidence" value="ECO:0007669"/>
    <property type="project" value="InterPro"/>
</dbReference>
<dbReference type="GO" id="GO:0097216">
    <property type="term" value="F:guanosine tetraphosphate binding"/>
    <property type="evidence" value="ECO:0007669"/>
    <property type="project" value="UniProtKB-ARBA"/>
</dbReference>
<dbReference type="GO" id="GO:0003746">
    <property type="term" value="F:translation elongation factor activity"/>
    <property type="evidence" value="ECO:0007669"/>
    <property type="project" value="UniProtKB-UniRule"/>
</dbReference>
<dbReference type="GO" id="GO:0032790">
    <property type="term" value="P:ribosome disassembly"/>
    <property type="evidence" value="ECO:0007669"/>
    <property type="project" value="TreeGrafter"/>
</dbReference>
<dbReference type="CDD" id="cd01886">
    <property type="entry name" value="EF-G"/>
    <property type="match status" value="1"/>
</dbReference>
<dbReference type="CDD" id="cd16262">
    <property type="entry name" value="EFG_III"/>
    <property type="match status" value="1"/>
</dbReference>
<dbReference type="CDD" id="cd01434">
    <property type="entry name" value="EFG_mtEFG1_IV"/>
    <property type="match status" value="1"/>
</dbReference>
<dbReference type="CDD" id="cd03713">
    <property type="entry name" value="EFG_mtEFG_C"/>
    <property type="match status" value="1"/>
</dbReference>
<dbReference type="CDD" id="cd04088">
    <property type="entry name" value="EFG_mtEFG_II"/>
    <property type="match status" value="1"/>
</dbReference>
<dbReference type="FunFam" id="2.40.30.10:FF:000006">
    <property type="entry name" value="Elongation factor G"/>
    <property type="match status" value="1"/>
</dbReference>
<dbReference type="FunFam" id="3.30.230.10:FF:000003">
    <property type="entry name" value="Elongation factor G"/>
    <property type="match status" value="1"/>
</dbReference>
<dbReference type="FunFam" id="3.30.70.240:FF:000001">
    <property type="entry name" value="Elongation factor G"/>
    <property type="match status" value="1"/>
</dbReference>
<dbReference type="FunFam" id="3.30.70.870:FF:000001">
    <property type="entry name" value="Elongation factor G"/>
    <property type="match status" value="1"/>
</dbReference>
<dbReference type="FunFam" id="3.40.50.300:FF:000029">
    <property type="entry name" value="Elongation factor G"/>
    <property type="match status" value="1"/>
</dbReference>
<dbReference type="Gene3D" id="3.30.230.10">
    <property type="match status" value="1"/>
</dbReference>
<dbReference type="Gene3D" id="3.30.70.240">
    <property type="match status" value="1"/>
</dbReference>
<dbReference type="Gene3D" id="3.30.70.870">
    <property type="entry name" value="Elongation Factor G (Translational Gtpase), domain 3"/>
    <property type="match status" value="1"/>
</dbReference>
<dbReference type="Gene3D" id="3.40.50.300">
    <property type="entry name" value="P-loop containing nucleotide triphosphate hydrolases"/>
    <property type="match status" value="1"/>
</dbReference>
<dbReference type="Gene3D" id="2.40.30.10">
    <property type="entry name" value="Translation factors"/>
    <property type="match status" value="1"/>
</dbReference>
<dbReference type="HAMAP" id="MF_00054_B">
    <property type="entry name" value="EF_G_EF_2_B"/>
    <property type="match status" value="1"/>
</dbReference>
<dbReference type="InterPro" id="IPR041095">
    <property type="entry name" value="EFG_II"/>
</dbReference>
<dbReference type="InterPro" id="IPR009022">
    <property type="entry name" value="EFG_III"/>
</dbReference>
<dbReference type="InterPro" id="IPR035647">
    <property type="entry name" value="EFG_III/V"/>
</dbReference>
<dbReference type="InterPro" id="IPR047872">
    <property type="entry name" value="EFG_IV"/>
</dbReference>
<dbReference type="InterPro" id="IPR035649">
    <property type="entry name" value="EFG_V"/>
</dbReference>
<dbReference type="InterPro" id="IPR000640">
    <property type="entry name" value="EFG_V-like"/>
</dbReference>
<dbReference type="InterPro" id="IPR004161">
    <property type="entry name" value="EFTu-like_2"/>
</dbReference>
<dbReference type="InterPro" id="IPR031157">
    <property type="entry name" value="G_TR_CS"/>
</dbReference>
<dbReference type="InterPro" id="IPR027417">
    <property type="entry name" value="P-loop_NTPase"/>
</dbReference>
<dbReference type="InterPro" id="IPR020568">
    <property type="entry name" value="Ribosomal_Su5_D2-typ_SF"/>
</dbReference>
<dbReference type="InterPro" id="IPR014721">
    <property type="entry name" value="Ribsml_uS5_D2-typ_fold_subgr"/>
</dbReference>
<dbReference type="InterPro" id="IPR005225">
    <property type="entry name" value="Small_GTP-bd"/>
</dbReference>
<dbReference type="InterPro" id="IPR000795">
    <property type="entry name" value="T_Tr_GTP-bd_dom"/>
</dbReference>
<dbReference type="InterPro" id="IPR009000">
    <property type="entry name" value="Transl_B-barrel_sf"/>
</dbReference>
<dbReference type="InterPro" id="IPR004540">
    <property type="entry name" value="Transl_elong_EFG/EF2"/>
</dbReference>
<dbReference type="InterPro" id="IPR005517">
    <property type="entry name" value="Transl_elong_EFG/EF2_IV"/>
</dbReference>
<dbReference type="NCBIfam" id="TIGR00484">
    <property type="entry name" value="EF-G"/>
    <property type="match status" value="1"/>
</dbReference>
<dbReference type="NCBIfam" id="NF009381">
    <property type="entry name" value="PRK12740.1-5"/>
    <property type="match status" value="1"/>
</dbReference>
<dbReference type="NCBIfam" id="TIGR00231">
    <property type="entry name" value="small_GTP"/>
    <property type="match status" value="1"/>
</dbReference>
<dbReference type="PANTHER" id="PTHR43261:SF1">
    <property type="entry name" value="RIBOSOME-RELEASING FACTOR 2, MITOCHONDRIAL"/>
    <property type="match status" value="1"/>
</dbReference>
<dbReference type="PANTHER" id="PTHR43261">
    <property type="entry name" value="TRANSLATION ELONGATION FACTOR G-RELATED"/>
    <property type="match status" value="1"/>
</dbReference>
<dbReference type="Pfam" id="PF00679">
    <property type="entry name" value="EFG_C"/>
    <property type="match status" value="1"/>
</dbReference>
<dbReference type="Pfam" id="PF14492">
    <property type="entry name" value="EFG_III"/>
    <property type="match status" value="1"/>
</dbReference>
<dbReference type="Pfam" id="PF03764">
    <property type="entry name" value="EFG_IV"/>
    <property type="match status" value="1"/>
</dbReference>
<dbReference type="Pfam" id="PF00009">
    <property type="entry name" value="GTP_EFTU"/>
    <property type="match status" value="1"/>
</dbReference>
<dbReference type="Pfam" id="PF03144">
    <property type="entry name" value="GTP_EFTU_D2"/>
    <property type="match status" value="1"/>
</dbReference>
<dbReference type="PRINTS" id="PR00315">
    <property type="entry name" value="ELONGATNFCT"/>
</dbReference>
<dbReference type="SMART" id="SM00838">
    <property type="entry name" value="EFG_C"/>
    <property type="match status" value="1"/>
</dbReference>
<dbReference type="SMART" id="SM00889">
    <property type="entry name" value="EFG_IV"/>
    <property type="match status" value="1"/>
</dbReference>
<dbReference type="SUPFAM" id="SSF54980">
    <property type="entry name" value="EF-G C-terminal domain-like"/>
    <property type="match status" value="2"/>
</dbReference>
<dbReference type="SUPFAM" id="SSF52540">
    <property type="entry name" value="P-loop containing nucleoside triphosphate hydrolases"/>
    <property type="match status" value="1"/>
</dbReference>
<dbReference type="SUPFAM" id="SSF54211">
    <property type="entry name" value="Ribosomal protein S5 domain 2-like"/>
    <property type="match status" value="1"/>
</dbReference>
<dbReference type="SUPFAM" id="SSF50447">
    <property type="entry name" value="Translation proteins"/>
    <property type="match status" value="1"/>
</dbReference>
<dbReference type="PROSITE" id="PS00301">
    <property type="entry name" value="G_TR_1"/>
    <property type="match status" value="1"/>
</dbReference>
<dbReference type="PROSITE" id="PS51722">
    <property type="entry name" value="G_TR_2"/>
    <property type="match status" value="1"/>
</dbReference>
<protein>
    <recommendedName>
        <fullName evidence="1">Elongation factor G 1</fullName>
        <shortName evidence="1">EF-G 1</shortName>
    </recommendedName>
</protein>
<evidence type="ECO:0000255" key="1">
    <source>
        <dbReference type="HAMAP-Rule" id="MF_00054"/>
    </source>
</evidence>
<organism>
    <name type="scientific">Aliivibrio fischeri (strain ATCC 700601 / ES114)</name>
    <name type="common">Vibrio fischeri</name>
    <dbReference type="NCBI Taxonomy" id="312309"/>
    <lineage>
        <taxon>Bacteria</taxon>
        <taxon>Pseudomonadati</taxon>
        <taxon>Pseudomonadota</taxon>
        <taxon>Gammaproteobacteria</taxon>
        <taxon>Vibrionales</taxon>
        <taxon>Vibrionaceae</taxon>
        <taxon>Aliivibrio</taxon>
    </lineage>
</organism>
<comment type="function">
    <text evidence="1">Catalyzes the GTP-dependent ribosomal translocation step during translation elongation. During this step, the ribosome changes from the pre-translocational (PRE) to the post-translocational (POST) state as the newly formed A-site-bound peptidyl-tRNA and P-site-bound deacylated tRNA move to the P and E sites, respectively. Catalyzes the coordinated movement of the two tRNA molecules, the mRNA and conformational changes in the ribosome.</text>
</comment>
<comment type="subcellular location">
    <subcellularLocation>
        <location evidence="1">Cytoplasm</location>
    </subcellularLocation>
</comment>
<comment type="similarity">
    <text evidence="1">Belongs to the TRAFAC class translation factor GTPase superfamily. Classic translation factor GTPase family. EF-G/EF-2 subfamily.</text>
</comment>
<gene>
    <name evidence="1" type="primary">fusA1</name>
    <name type="ordered locus">VF_0232</name>
</gene>
<accession>Q5E8B9</accession>
<reference key="1">
    <citation type="journal article" date="2005" name="Proc. Natl. Acad. Sci. U.S.A.">
        <title>Complete genome sequence of Vibrio fischeri: a symbiotic bacterium with pathogenic congeners.</title>
        <authorList>
            <person name="Ruby E.G."/>
            <person name="Urbanowski M."/>
            <person name="Campbell J."/>
            <person name="Dunn A."/>
            <person name="Faini M."/>
            <person name="Gunsalus R."/>
            <person name="Lostroh P."/>
            <person name="Lupp C."/>
            <person name="McCann J."/>
            <person name="Millikan D."/>
            <person name="Schaefer A."/>
            <person name="Stabb E."/>
            <person name="Stevens A."/>
            <person name="Visick K."/>
            <person name="Whistler C."/>
            <person name="Greenberg E.P."/>
        </authorList>
    </citation>
    <scope>NUCLEOTIDE SEQUENCE [LARGE SCALE GENOMIC DNA]</scope>
    <source>
        <strain>ATCC 700601 / ES114</strain>
    </source>
</reference>
<proteinExistence type="inferred from homology"/>
<keyword id="KW-0963">Cytoplasm</keyword>
<keyword id="KW-0251">Elongation factor</keyword>
<keyword id="KW-0342">GTP-binding</keyword>
<keyword id="KW-0547">Nucleotide-binding</keyword>
<keyword id="KW-0648">Protein biosynthesis</keyword>
<keyword id="KW-1185">Reference proteome</keyword>
<feature type="chain" id="PRO_0000225247" description="Elongation factor G 1">
    <location>
        <begin position="1"/>
        <end position="698"/>
    </location>
</feature>
<feature type="domain" description="tr-type G">
    <location>
        <begin position="8"/>
        <end position="290"/>
    </location>
</feature>
<feature type="binding site" evidence="1">
    <location>
        <begin position="17"/>
        <end position="24"/>
    </location>
    <ligand>
        <name>GTP</name>
        <dbReference type="ChEBI" id="CHEBI:37565"/>
    </ligand>
</feature>
<feature type="binding site" evidence="1">
    <location>
        <begin position="88"/>
        <end position="92"/>
    </location>
    <ligand>
        <name>GTP</name>
        <dbReference type="ChEBI" id="CHEBI:37565"/>
    </ligand>
</feature>
<feature type="binding site" evidence="1">
    <location>
        <begin position="142"/>
        <end position="145"/>
    </location>
    <ligand>
        <name>GTP</name>
        <dbReference type="ChEBI" id="CHEBI:37565"/>
    </ligand>
</feature>